<organism>
    <name type="scientific">Nelumbo lutea</name>
    <name type="common">American lotus</name>
    <name type="synonym">Nelumbo nucifera subsp. lutea</name>
    <dbReference type="NCBI Taxonomy" id="4431"/>
    <lineage>
        <taxon>Eukaryota</taxon>
        <taxon>Viridiplantae</taxon>
        <taxon>Streptophyta</taxon>
        <taxon>Embryophyta</taxon>
        <taxon>Tracheophyta</taxon>
        <taxon>Spermatophyta</taxon>
        <taxon>Magnoliopsida</taxon>
        <taxon>Proteales</taxon>
        <taxon>Nelumbonaceae</taxon>
        <taxon>Nelumbo</taxon>
    </lineage>
</organism>
<keyword id="KW-0150">Chloroplast</keyword>
<keyword id="KW-0249">Electron transport</keyword>
<keyword id="KW-0349">Heme</keyword>
<keyword id="KW-0408">Iron</keyword>
<keyword id="KW-0472">Membrane</keyword>
<keyword id="KW-0479">Metal-binding</keyword>
<keyword id="KW-0602">Photosynthesis</keyword>
<keyword id="KW-0604">Photosystem II</keyword>
<keyword id="KW-0934">Plastid</keyword>
<keyword id="KW-0793">Thylakoid</keyword>
<keyword id="KW-0812">Transmembrane</keyword>
<keyword id="KW-1133">Transmembrane helix</keyword>
<keyword id="KW-0813">Transport</keyword>
<accession>Q6EYS0</accession>
<proteinExistence type="inferred from homology"/>
<comment type="function">
    <text evidence="1">This b-type cytochrome is tightly associated with the reaction center of photosystem II (PSII). PSII is a light-driven water:plastoquinone oxidoreductase that uses light energy to abstract electrons from H(2)O, generating O(2) and a proton gradient subsequently used for ATP formation. It consists of a core antenna complex that captures photons, and an electron transfer chain that converts photonic excitation into a charge separation.</text>
</comment>
<comment type="cofactor">
    <cofactor evidence="1">
        <name>heme b</name>
        <dbReference type="ChEBI" id="CHEBI:60344"/>
    </cofactor>
    <text evidence="1">With its partner (PsbE) binds heme. PSII binds additional chlorophylls, carotenoids and specific lipids.</text>
</comment>
<comment type="subunit">
    <text evidence="1">Heterodimer of an alpha subunit and a beta subunit. PSII is composed of 1 copy each of membrane proteins PsbA, PsbB, PsbC, PsbD, PsbE, PsbF, PsbH, PsbI, PsbJ, PsbK, PsbL, PsbM, PsbT, PsbX, PsbY, PsbZ, Psb30/Ycf12, at least 3 peripheral proteins of the oxygen-evolving complex and a large number of cofactors. It forms dimeric complexes.</text>
</comment>
<comment type="subcellular location">
    <subcellularLocation>
        <location evidence="1">Plastid</location>
        <location evidence="1">Chloroplast thylakoid membrane</location>
        <topology evidence="1">Single-pass membrane protein</topology>
    </subcellularLocation>
</comment>
<comment type="similarity">
    <text evidence="1">Belongs to the PsbE/PsbF family.</text>
</comment>
<name>PSBF_NELLU</name>
<evidence type="ECO:0000255" key="1">
    <source>
        <dbReference type="HAMAP-Rule" id="MF_00643"/>
    </source>
</evidence>
<reference key="1">
    <citation type="submission" date="2002-07" db="EMBL/GenBank/DDBJ databases">
        <title>Parsing out signal and noise for seed-plant phylogenetic inference.</title>
        <authorList>
            <person name="Graham S.W."/>
            <person name="Rai H.S."/>
            <person name="Ikegami K."/>
            <person name="Reeves P.A."/>
            <person name="Olmstead R.G."/>
        </authorList>
    </citation>
    <scope>NUCLEOTIDE SEQUENCE [GENOMIC DNA]</scope>
</reference>
<feature type="chain" id="PRO_0000200424" description="Cytochrome b559 subunit beta">
    <location>
        <begin position="1"/>
        <end position="39"/>
    </location>
</feature>
<feature type="transmembrane region" description="Helical" evidence="1">
    <location>
        <begin position="14"/>
        <end position="30"/>
    </location>
</feature>
<feature type="binding site" description="axial binding residue" evidence="1">
    <location>
        <position position="18"/>
    </location>
    <ligand>
        <name>heme</name>
        <dbReference type="ChEBI" id="CHEBI:30413"/>
        <note>ligand shared with alpha subunit</note>
    </ligand>
    <ligandPart>
        <name>Fe</name>
        <dbReference type="ChEBI" id="CHEBI:18248"/>
    </ligandPart>
</feature>
<dbReference type="EMBL" id="AF528877">
    <property type="protein sequence ID" value="AAQ09303.1"/>
    <property type="molecule type" value="Genomic_DNA"/>
</dbReference>
<dbReference type="RefSeq" id="YP_004563883.1">
    <property type="nucleotide sequence ID" value="NC_015605.1"/>
</dbReference>
<dbReference type="SMR" id="Q6EYS0"/>
<dbReference type="GeneID" id="10743554"/>
<dbReference type="GO" id="GO:0009535">
    <property type="term" value="C:chloroplast thylakoid membrane"/>
    <property type="evidence" value="ECO:0007669"/>
    <property type="project" value="UniProtKB-SubCell"/>
</dbReference>
<dbReference type="GO" id="GO:0009539">
    <property type="term" value="C:photosystem II reaction center"/>
    <property type="evidence" value="ECO:0007669"/>
    <property type="project" value="InterPro"/>
</dbReference>
<dbReference type="GO" id="GO:0009055">
    <property type="term" value="F:electron transfer activity"/>
    <property type="evidence" value="ECO:0007669"/>
    <property type="project" value="UniProtKB-UniRule"/>
</dbReference>
<dbReference type="GO" id="GO:0020037">
    <property type="term" value="F:heme binding"/>
    <property type="evidence" value="ECO:0007669"/>
    <property type="project" value="InterPro"/>
</dbReference>
<dbReference type="GO" id="GO:0005506">
    <property type="term" value="F:iron ion binding"/>
    <property type="evidence" value="ECO:0007669"/>
    <property type="project" value="UniProtKB-UniRule"/>
</dbReference>
<dbReference type="GO" id="GO:0009767">
    <property type="term" value="P:photosynthetic electron transport chain"/>
    <property type="evidence" value="ECO:0007669"/>
    <property type="project" value="InterPro"/>
</dbReference>
<dbReference type="HAMAP" id="MF_00643">
    <property type="entry name" value="PSII_PsbF"/>
    <property type="match status" value="1"/>
</dbReference>
<dbReference type="InterPro" id="IPR006241">
    <property type="entry name" value="PSII_cyt_b559_bsu"/>
</dbReference>
<dbReference type="InterPro" id="IPR006216">
    <property type="entry name" value="PSII_cyt_b559_CS"/>
</dbReference>
<dbReference type="InterPro" id="IPR013081">
    <property type="entry name" value="PSII_cyt_b559_N"/>
</dbReference>
<dbReference type="NCBIfam" id="TIGR01333">
    <property type="entry name" value="cyt_b559_beta"/>
    <property type="match status" value="1"/>
</dbReference>
<dbReference type="Pfam" id="PF00283">
    <property type="entry name" value="Cytochrom_B559"/>
    <property type="match status" value="1"/>
</dbReference>
<dbReference type="PIRSF" id="PIRSF000037">
    <property type="entry name" value="PsbF"/>
    <property type="match status" value="1"/>
</dbReference>
<dbReference type="SUPFAM" id="SSF161045">
    <property type="entry name" value="Cytochrome b559 subunits"/>
    <property type="match status" value="1"/>
</dbReference>
<dbReference type="PROSITE" id="PS00537">
    <property type="entry name" value="CYTOCHROME_B559"/>
    <property type="match status" value="1"/>
</dbReference>
<geneLocation type="chloroplast"/>
<sequence length="39" mass="4424">MTIDRTYPIFTVRWLAVHGLAVPTVSFLGSISAMQFIQR</sequence>
<protein>
    <recommendedName>
        <fullName evidence="1">Cytochrome b559 subunit beta</fullName>
    </recommendedName>
    <alternativeName>
        <fullName evidence="1">PSII reaction center subunit VI</fullName>
    </alternativeName>
</protein>
<gene>
    <name evidence="1" type="primary">psbF</name>
</gene>